<organism>
    <name type="scientific">Solanum lycopersicum</name>
    <name type="common">Tomato</name>
    <name type="synonym">Lycopersicon esculentum</name>
    <dbReference type="NCBI Taxonomy" id="4081"/>
    <lineage>
        <taxon>Eukaryota</taxon>
        <taxon>Viridiplantae</taxon>
        <taxon>Streptophyta</taxon>
        <taxon>Embryophyta</taxon>
        <taxon>Tracheophyta</taxon>
        <taxon>Spermatophyta</taxon>
        <taxon>Magnoliopsida</taxon>
        <taxon>eudicotyledons</taxon>
        <taxon>Gunneridae</taxon>
        <taxon>Pentapetalae</taxon>
        <taxon>asterids</taxon>
        <taxon>lamiids</taxon>
        <taxon>Solanales</taxon>
        <taxon>Solanaceae</taxon>
        <taxon>Solanoideae</taxon>
        <taxon>Solaneae</taxon>
        <taxon>Solanum</taxon>
        <taxon>Solanum subgen. Lycopersicon</taxon>
    </lineage>
</organism>
<protein>
    <recommendedName>
        <fullName>ATP synthase subunit 9, mitochondrial</fullName>
    </recommendedName>
    <alternativeName>
        <fullName>Lipid-binding protein</fullName>
    </alternativeName>
</protein>
<reference key="1">
    <citation type="journal article" date="1990" name="Nucleic Acids Res.">
        <title>Nucleotide sequence of the F0-ATPase subunit 9 gene from tomato mitochondria.</title>
        <authorList>
            <person name="Kazama S."/>
            <person name="Suzuki T."/>
            <person name="Kadowaki K."/>
            <person name="Akihama T."/>
        </authorList>
    </citation>
    <scope>NUCLEOTIDE SEQUENCE [GENOMIC DNA]</scope>
    <source>
        <strain>cv. Ponderosa</strain>
    </source>
</reference>
<feature type="chain" id="PRO_0000112213" description="ATP synthase subunit 9, mitochondrial">
    <location>
        <begin position="1"/>
        <end position="74"/>
    </location>
</feature>
<feature type="transmembrane region" description="Helical" evidence="2">
    <location>
        <begin position="8"/>
        <end position="28"/>
    </location>
</feature>
<feature type="transmembrane region" description="Helical" evidence="2">
    <location>
        <begin position="50"/>
        <end position="70"/>
    </location>
</feature>
<feature type="site" description="Reversibly protonated during proton transport" evidence="1">
    <location>
        <position position="57"/>
    </location>
</feature>
<evidence type="ECO:0000250" key="1"/>
<evidence type="ECO:0000255" key="2"/>
<evidence type="ECO:0000305" key="3"/>
<name>ATP9_SOLLC</name>
<geneLocation type="mitochondrion"/>
<sequence>MLEGAKLMGAGAATIALAGAAIGIGNVFSSLIHSVARNPSLAKQLFGYAILGFALTEAIALFALMMAFLISFVF</sequence>
<dbReference type="EMBL" id="X54409">
    <property type="protein sequence ID" value="CAA38272.1"/>
    <property type="status" value="ALT_SEQ"/>
    <property type="molecule type" value="Genomic_DNA"/>
</dbReference>
<dbReference type="PIR" id="S11494">
    <property type="entry name" value="LWTOA"/>
</dbReference>
<dbReference type="SMR" id="P60117"/>
<dbReference type="Proteomes" id="UP000004994">
    <property type="component" value="Unplaced"/>
</dbReference>
<dbReference type="GO" id="GO:0031966">
    <property type="term" value="C:mitochondrial membrane"/>
    <property type="evidence" value="ECO:0007669"/>
    <property type="project" value="UniProtKB-SubCell"/>
</dbReference>
<dbReference type="GO" id="GO:0045259">
    <property type="term" value="C:proton-transporting ATP synthase complex"/>
    <property type="evidence" value="ECO:0007669"/>
    <property type="project" value="UniProtKB-KW"/>
</dbReference>
<dbReference type="GO" id="GO:0033177">
    <property type="term" value="C:proton-transporting two-sector ATPase complex, proton-transporting domain"/>
    <property type="evidence" value="ECO:0007669"/>
    <property type="project" value="InterPro"/>
</dbReference>
<dbReference type="GO" id="GO:0005524">
    <property type="term" value="F:ATP binding"/>
    <property type="evidence" value="ECO:0007669"/>
    <property type="project" value="UniProtKB-KW"/>
</dbReference>
<dbReference type="GO" id="GO:0008289">
    <property type="term" value="F:lipid binding"/>
    <property type="evidence" value="ECO:0007669"/>
    <property type="project" value="UniProtKB-KW"/>
</dbReference>
<dbReference type="GO" id="GO:0015078">
    <property type="term" value="F:proton transmembrane transporter activity"/>
    <property type="evidence" value="ECO:0007669"/>
    <property type="project" value="InterPro"/>
</dbReference>
<dbReference type="GO" id="GO:0015986">
    <property type="term" value="P:proton motive force-driven ATP synthesis"/>
    <property type="evidence" value="ECO:0000318"/>
    <property type="project" value="GO_Central"/>
</dbReference>
<dbReference type="CDD" id="cd18182">
    <property type="entry name" value="ATP-synt_Fo_c_ATP5G3"/>
    <property type="match status" value="1"/>
</dbReference>
<dbReference type="FunFam" id="1.20.20.10:FF:000005">
    <property type="entry name" value="ATP synthase subunit 9, mitochondrial"/>
    <property type="match status" value="1"/>
</dbReference>
<dbReference type="Gene3D" id="1.20.20.10">
    <property type="entry name" value="F1F0 ATP synthase subunit C"/>
    <property type="match status" value="1"/>
</dbReference>
<dbReference type="HAMAP" id="MF_01396">
    <property type="entry name" value="ATP_synth_c_bact"/>
    <property type="match status" value="1"/>
</dbReference>
<dbReference type="InterPro" id="IPR000454">
    <property type="entry name" value="ATP_synth_F0_csu"/>
</dbReference>
<dbReference type="InterPro" id="IPR020537">
    <property type="entry name" value="ATP_synth_F0_csu_DDCD_BS"/>
</dbReference>
<dbReference type="InterPro" id="IPR038662">
    <property type="entry name" value="ATP_synth_F0_csu_sf"/>
</dbReference>
<dbReference type="InterPro" id="IPR002379">
    <property type="entry name" value="ATPase_proteolipid_c-like_dom"/>
</dbReference>
<dbReference type="InterPro" id="IPR035921">
    <property type="entry name" value="F/V-ATP_Csub_sf"/>
</dbReference>
<dbReference type="PANTHER" id="PTHR10031">
    <property type="entry name" value="ATP SYNTHASE LIPID-BINDING PROTEIN, MITOCHONDRIAL"/>
    <property type="match status" value="1"/>
</dbReference>
<dbReference type="PANTHER" id="PTHR10031:SF0">
    <property type="entry name" value="ATPASE PROTEIN 9"/>
    <property type="match status" value="1"/>
</dbReference>
<dbReference type="Pfam" id="PF00137">
    <property type="entry name" value="ATP-synt_C"/>
    <property type="match status" value="1"/>
</dbReference>
<dbReference type="PRINTS" id="PR00124">
    <property type="entry name" value="ATPASEC"/>
</dbReference>
<dbReference type="SUPFAM" id="SSF81333">
    <property type="entry name" value="F1F0 ATP synthase subunit C"/>
    <property type="match status" value="1"/>
</dbReference>
<dbReference type="PROSITE" id="PS00605">
    <property type="entry name" value="ATPASE_C"/>
    <property type="match status" value="1"/>
</dbReference>
<comment type="function">
    <text>This protein is one of the chains of the nonenzymatic membrane component (F0) of mitochondrial ATPase.</text>
</comment>
<comment type="subunit">
    <text>F-type ATPases have 2 components, CF(1) - the catalytic core - and CF(0) - the membrane proton channel. CF(1) has five subunits: alpha(3), beta(3), gamma(1), delta(1), epsilon(1). CF(0) has three main subunits: a, b and c.</text>
</comment>
<comment type="subcellular location">
    <subcellularLocation>
        <location evidence="3">Mitochondrion membrane</location>
        <topology evidence="3">Multi-pass membrane protein</topology>
    </subcellularLocation>
</comment>
<comment type="RNA editing">
    <location>
        <position position="7" evidence="1"/>
    </location>
    <location>
        <position position="17" evidence="1"/>
    </location>
    <location>
        <position position="28" evidence="1"/>
    </location>
    <location>
        <position position="31" evidence="1"/>
    </location>
    <location>
        <position position="61" evidence="1"/>
    </location>
    <location>
        <position position="64" evidence="1"/>
    </location>
    <location>
        <position position="75" evidence="1"/>
    </location>
    <text evidence="1">The stop codon at position 75 is created by RNA editing.</text>
</comment>
<comment type="similarity">
    <text evidence="3">Belongs to the ATPase C chain family.</text>
</comment>
<gene>
    <name type="primary">ATP9</name>
</gene>
<proteinExistence type="inferred from homology"/>
<accession>P60117</accession>
<accession>P05497</accession>
<accession>P05498</accession>
<keyword id="KW-0067">ATP-binding</keyword>
<keyword id="KW-0138">CF(0)</keyword>
<keyword id="KW-0375">Hydrogen ion transport</keyword>
<keyword id="KW-0406">Ion transport</keyword>
<keyword id="KW-0446">Lipid-binding</keyword>
<keyword id="KW-0472">Membrane</keyword>
<keyword id="KW-0496">Mitochondrion</keyword>
<keyword id="KW-0547">Nucleotide-binding</keyword>
<keyword id="KW-1185">Reference proteome</keyword>
<keyword id="KW-0691">RNA editing</keyword>
<keyword id="KW-0812">Transmembrane</keyword>
<keyword id="KW-1133">Transmembrane helix</keyword>
<keyword id="KW-0813">Transport</keyword>